<protein>
    <recommendedName>
        <fullName>Biofilm operon icaADBC HTH-type negative transcriptional regulator IcaR</fullName>
    </recommendedName>
    <alternativeName>
        <fullName>Intercellular adhesion protein R</fullName>
    </alternativeName>
</protein>
<dbReference type="EMBL" id="BX571857">
    <property type="protein sequence ID" value="CAG44368.1"/>
    <property type="molecule type" value="Genomic_DNA"/>
</dbReference>
<dbReference type="RefSeq" id="WP_000653261.1">
    <property type="nucleotide sequence ID" value="NC_002953.3"/>
</dbReference>
<dbReference type="SMR" id="Q6G609"/>
<dbReference type="KEGG" id="sas:SAS2551"/>
<dbReference type="HOGENOM" id="CLU_124987_0_0_9"/>
<dbReference type="GO" id="GO:0003677">
    <property type="term" value="F:DNA binding"/>
    <property type="evidence" value="ECO:0007669"/>
    <property type="project" value="UniProtKB-KW"/>
</dbReference>
<dbReference type="Gene3D" id="1.10.357.10">
    <property type="entry name" value="Tetracycline Repressor, domain 2"/>
    <property type="match status" value="1"/>
</dbReference>
<dbReference type="InterPro" id="IPR009057">
    <property type="entry name" value="Homeodomain-like_sf"/>
</dbReference>
<dbReference type="InterPro" id="IPR050624">
    <property type="entry name" value="HTH-type_Tx_Regulator"/>
</dbReference>
<dbReference type="InterPro" id="IPR001647">
    <property type="entry name" value="HTH_TetR"/>
</dbReference>
<dbReference type="InterPro" id="IPR041646">
    <property type="entry name" value="IcaR_C"/>
</dbReference>
<dbReference type="PANTHER" id="PTHR43479">
    <property type="entry name" value="ACREF/ENVCD OPERON REPRESSOR-RELATED"/>
    <property type="match status" value="1"/>
</dbReference>
<dbReference type="PANTHER" id="PTHR43479:SF11">
    <property type="entry name" value="ACREF_ENVCD OPERON REPRESSOR-RELATED"/>
    <property type="match status" value="1"/>
</dbReference>
<dbReference type="Pfam" id="PF18665">
    <property type="entry name" value="TetR_C_37"/>
    <property type="match status" value="1"/>
</dbReference>
<dbReference type="Pfam" id="PF00440">
    <property type="entry name" value="TetR_N"/>
    <property type="match status" value="1"/>
</dbReference>
<dbReference type="PRINTS" id="PR00455">
    <property type="entry name" value="HTHTETR"/>
</dbReference>
<dbReference type="SUPFAM" id="SSF46689">
    <property type="entry name" value="Homeodomain-like"/>
    <property type="match status" value="1"/>
</dbReference>
<dbReference type="PROSITE" id="PS50977">
    <property type="entry name" value="HTH_TETR_2"/>
    <property type="match status" value="1"/>
</dbReference>
<gene>
    <name type="primary">icaR</name>
    <name type="ordered locus">SAS2551</name>
</gene>
<keyword id="KW-0238">DNA-binding</keyword>
<keyword id="KW-0678">Repressor</keyword>
<keyword id="KW-0804">Transcription</keyword>
<keyword id="KW-0805">Transcription regulation</keyword>
<name>ICAR_STAAS</name>
<feature type="chain" id="PRO_0000070601" description="Biofilm operon icaADBC HTH-type negative transcriptional regulator IcaR">
    <location>
        <begin position="1"/>
        <end position="186"/>
    </location>
</feature>
<feature type="domain" description="HTH tetR-type" evidence="2">
    <location>
        <begin position="1"/>
        <end position="59"/>
    </location>
</feature>
<feature type="DNA-binding region" description="H-T-H motif" evidence="2">
    <location>
        <begin position="22"/>
        <end position="41"/>
    </location>
</feature>
<accession>Q6G609</accession>
<organism>
    <name type="scientific">Staphylococcus aureus (strain MSSA476)</name>
    <dbReference type="NCBI Taxonomy" id="282459"/>
    <lineage>
        <taxon>Bacteria</taxon>
        <taxon>Bacillati</taxon>
        <taxon>Bacillota</taxon>
        <taxon>Bacilli</taxon>
        <taxon>Bacillales</taxon>
        <taxon>Staphylococcaceae</taxon>
        <taxon>Staphylococcus</taxon>
    </lineage>
</organism>
<proteinExistence type="inferred from homology"/>
<sequence>MKDKIIDNAITLFSEKGYDGTTLDDIAKSVNIKKASLYYHFDSKKSIYEQSVKCCFDYLNNIIMMNQNKSNYSIDALYQFLFEFIFDIEERYIRMYVQLSNTPEEFSGNIYGQIQDLNQSLSKEIAKFYDESKIKMTKEDFQNLILLFLESWYLKASFSQKFGAVEESKSQFKDEVYSLLNIFLKK</sequence>
<evidence type="ECO:0000250" key="1"/>
<evidence type="ECO:0000255" key="2">
    <source>
        <dbReference type="PROSITE-ProRule" id="PRU00335"/>
    </source>
</evidence>
<comment type="function">
    <text evidence="1">Represses transcription of the icaADBC operon necessary for biofilm production.</text>
</comment>
<comment type="subunit">
    <text evidence="1">Homodimer.</text>
</comment>
<comment type="miscellaneous">
    <text evidence="1">Binding to the ica operator DNA involves two IcaR dimers and is highly cooperative.</text>
</comment>
<reference key="1">
    <citation type="journal article" date="2004" name="Proc. Natl. Acad. Sci. U.S.A.">
        <title>Complete genomes of two clinical Staphylococcus aureus strains: evidence for the rapid evolution of virulence and drug resistance.</title>
        <authorList>
            <person name="Holden M.T.G."/>
            <person name="Feil E.J."/>
            <person name="Lindsay J.A."/>
            <person name="Peacock S.J."/>
            <person name="Day N.P.J."/>
            <person name="Enright M.C."/>
            <person name="Foster T.J."/>
            <person name="Moore C.E."/>
            <person name="Hurst L."/>
            <person name="Atkin R."/>
            <person name="Barron A."/>
            <person name="Bason N."/>
            <person name="Bentley S.D."/>
            <person name="Chillingworth C."/>
            <person name="Chillingworth T."/>
            <person name="Churcher C."/>
            <person name="Clark L."/>
            <person name="Corton C."/>
            <person name="Cronin A."/>
            <person name="Doggett J."/>
            <person name="Dowd L."/>
            <person name="Feltwell T."/>
            <person name="Hance Z."/>
            <person name="Harris B."/>
            <person name="Hauser H."/>
            <person name="Holroyd S."/>
            <person name="Jagels K."/>
            <person name="James K.D."/>
            <person name="Lennard N."/>
            <person name="Line A."/>
            <person name="Mayes R."/>
            <person name="Moule S."/>
            <person name="Mungall K."/>
            <person name="Ormond D."/>
            <person name="Quail M.A."/>
            <person name="Rabbinowitsch E."/>
            <person name="Rutherford K.M."/>
            <person name="Sanders M."/>
            <person name="Sharp S."/>
            <person name="Simmonds M."/>
            <person name="Stevens K."/>
            <person name="Whitehead S."/>
            <person name="Barrell B.G."/>
            <person name="Spratt B.G."/>
            <person name="Parkhill J."/>
        </authorList>
    </citation>
    <scope>NUCLEOTIDE SEQUENCE [LARGE SCALE GENOMIC DNA]</scope>
    <source>
        <strain>MSSA476</strain>
    </source>
</reference>